<gene>
    <name evidence="1" type="primary">namA</name>
    <name type="ordered locus">BALH_1798</name>
</gene>
<reference key="1">
    <citation type="journal article" date="2007" name="J. Bacteriol.">
        <title>The complete genome sequence of Bacillus thuringiensis Al Hakam.</title>
        <authorList>
            <person name="Challacombe J.F."/>
            <person name="Altherr M.R."/>
            <person name="Xie G."/>
            <person name="Bhotika S.S."/>
            <person name="Brown N."/>
            <person name="Bruce D."/>
            <person name="Campbell C.S."/>
            <person name="Campbell M.L."/>
            <person name="Chen J."/>
            <person name="Chertkov O."/>
            <person name="Cleland C."/>
            <person name="Dimitrijevic M."/>
            <person name="Doggett N.A."/>
            <person name="Fawcett J.J."/>
            <person name="Glavina T."/>
            <person name="Goodwin L.A."/>
            <person name="Green L.D."/>
            <person name="Han C.S."/>
            <person name="Hill K.K."/>
            <person name="Hitchcock P."/>
            <person name="Jackson P.J."/>
            <person name="Keim P."/>
            <person name="Kewalramani A.R."/>
            <person name="Longmire J."/>
            <person name="Lucas S."/>
            <person name="Malfatti S."/>
            <person name="Martinez D."/>
            <person name="McMurry K."/>
            <person name="Meincke L.J."/>
            <person name="Misra M."/>
            <person name="Moseman B.L."/>
            <person name="Mundt M."/>
            <person name="Munk A.C."/>
            <person name="Okinaka R.T."/>
            <person name="Parson-Quintana B."/>
            <person name="Reilly L.P."/>
            <person name="Richardson P."/>
            <person name="Robinson D.L."/>
            <person name="Saunders E."/>
            <person name="Tapia R."/>
            <person name="Tesmer J.G."/>
            <person name="Thayer N."/>
            <person name="Thompson L.S."/>
            <person name="Tice H."/>
            <person name="Ticknor L.O."/>
            <person name="Wills P.L."/>
            <person name="Gilna P."/>
            <person name="Brettin T.S."/>
        </authorList>
    </citation>
    <scope>NUCLEOTIDE SEQUENCE [LARGE SCALE GENOMIC DNA]</scope>
    <source>
        <strain>Al Hakam</strain>
    </source>
</reference>
<evidence type="ECO:0000255" key="1">
    <source>
        <dbReference type="HAMAP-Rule" id="MF_01614"/>
    </source>
</evidence>
<keyword id="KW-0216">Detoxification</keyword>
<keyword id="KW-0285">Flavoprotein</keyword>
<keyword id="KW-0288">FMN</keyword>
<keyword id="KW-0521">NADP</keyword>
<keyword id="KW-0560">Oxidoreductase</keyword>
<accession>A0RD27</accession>
<dbReference type="EC" id="1.6.99.1" evidence="1"/>
<dbReference type="EMBL" id="CP000485">
    <property type="protein sequence ID" value="ABK85120.1"/>
    <property type="molecule type" value="Genomic_DNA"/>
</dbReference>
<dbReference type="RefSeq" id="WP_001083637.1">
    <property type="nucleotide sequence ID" value="NC_008600.1"/>
</dbReference>
<dbReference type="SMR" id="A0RD27"/>
<dbReference type="KEGG" id="btl:BALH_1798"/>
<dbReference type="HOGENOM" id="CLU_012153_2_1_9"/>
<dbReference type="GO" id="GO:0010181">
    <property type="term" value="F:FMN binding"/>
    <property type="evidence" value="ECO:0007669"/>
    <property type="project" value="UniProtKB-UniRule"/>
</dbReference>
<dbReference type="GO" id="GO:0050661">
    <property type="term" value="F:NADP binding"/>
    <property type="evidence" value="ECO:0007669"/>
    <property type="project" value="UniProtKB-UniRule"/>
</dbReference>
<dbReference type="GO" id="GO:0003959">
    <property type="term" value="F:NADPH dehydrogenase activity"/>
    <property type="evidence" value="ECO:0007669"/>
    <property type="project" value="UniProtKB-UniRule"/>
</dbReference>
<dbReference type="GO" id="GO:0009636">
    <property type="term" value="P:response to toxic substance"/>
    <property type="evidence" value="ECO:0007669"/>
    <property type="project" value="UniProtKB-KW"/>
</dbReference>
<dbReference type="CDD" id="cd02932">
    <property type="entry name" value="OYE_YqiM_FMN"/>
    <property type="match status" value="1"/>
</dbReference>
<dbReference type="Gene3D" id="3.20.20.70">
    <property type="entry name" value="Aldolase class I"/>
    <property type="match status" value="1"/>
</dbReference>
<dbReference type="HAMAP" id="MF_01614">
    <property type="entry name" value="NamA"/>
    <property type="match status" value="1"/>
</dbReference>
<dbReference type="InterPro" id="IPR013785">
    <property type="entry name" value="Aldolase_TIM"/>
</dbReference>
<dbReference type="InterPro" id="IPR023663">
    <property type="entry name" value="NADPH_DH_bac"/>
</dbReference>
<dbReference type="InterPro" id="IPR001155">
    <property type="entry name" value="OxRdtase_FMN_N"/>
</dbReference>
<dbReference type="InterPro" id="IPR044152">
    <property type="entry name" value="YqjM-like"/>
</dbReference>
<dbReference type="NCBIfam" id="NF010047">
    <property type="entry name" value="PRK13523.1"/>
    <property type="match status" value="1"/>
</dbReference>
<dbReference type="PANTHER" id="PTHR43303">
    <property type="entry name" value="NADPH DEHYDROGENASE C23G7.10C-RELATED"/>
    <property type="match status" value="1"/>
</dbReference>
<dbReference type="PANTHER" id="PTHR43303:SF4">
    <property type="entry name" value="NADPH DEHYDROGENASE C23G7.10C-RELATED"/>
    <property type="match status" value="1"/>
</dbReference>
<dbReference type="Pfam" id="PF00724">
    <property type="entry name" value="Oxidored_FMN"/>
    <property type="match status" value="1"/>
</dbReference>
<dbReference type="SUPFAM" id="SSF51395">
    <property type="entry name" value="FMN-linked oxidoreductases"/>
    <property type="match status" value="1"/>
</dbReference>
<sequence length="345" mass="38463">MNSELFSPYTIKDVTLKNRIVMSPMCMYSSENEDGQVTNFHLIHYGTRAAGQVGLVMIEATAVLPEGRISNKDLGIWDDSLIEGLHKTTTFIHDNGAKAAIQLAHAGRKAELETDALAPSAVPFNETMKIPVEMSIQQIKNTILAFQQAAVRSKQAGFDVIEIHGAHGYLINEFLSPLSNKRTDEYGGSPEKRYRFLREIIDSINEVWNGPLFVRISANDYHPDGLTVQDYVQYTKWMKEQGVDLIDCSSGAVVPARIDVYPGYQVQYAKHIKEHANIATGAVGLITTGAQAEQILTNNEADLIFIGRELLRNPYFPRIAANELGFELEEPYQYERAPGKISTNK</sequence>
<organism>
    <name type="scientific">Bacillus thuringiensis (strain Al Hakam)</name>
    <dbReference type="NCBI Taxonomy" id="412694"/>
    <lineage>
        <taxon>Bacteria</taxon>
        <taxon>Bacillati</taxon>
        <taxon>Bacillota</taxon>
        <taxon>Bacilli</taxon>
        <taxon>Bacillales</taxon>
        <taxon>Bacillaceae</taxon>
        <taxon>Bacillus</taxon>
        <taxon>Bacillus cereus group</taxon>
    </lineage>
</organism>
<feature type="chain" id="PRO_1000069455" description="NADPH dehydrogenase">
    <location>
        <begin position="1"/>
        <end position="345"/>
    </location>
</feature>
<feature type="binding site" evidence="1">
    <location>
        <begin position="23"/>
        <end position="26"/>
    </location>
    <ligand>
        <name>FMN</name>
        <dbReference type="ChEBI" id="CHEBI:58210"/>
    </ligand>
</feature>
<feature type="binding site" evidence="1">
    <location>
        <position position="28"/>
    </location>
    <ligand>
        <name>substrate</name>
    </ligand>
</feature>
<feature type="binding site" evidence="1">
    <location>
        <position position="60"/>
    </location>
    <ligand>
        <name>FMN</name>
        <dbReference type="ChEBI" id="CHEBI:58210"/>
    </ligand>
</feature>
<feature type="binding site" evidence="1">
    <location>
        <position position="102"/>
    </location>
    <ligand>
        <name>FMN</name>
        <dbReference type="ChEBI" id="CHEBI:58210"/>
    </ligand>
</feature>
<feature type="binding site" evidence="1">
    <location>
        <begin position="164"/>
        <end position="167"/>
    </location>
    <ligand>
        <name>substrate</name>
    </ligand>
</feature>
<feature type="binding site" evidence="1">
    <location>
        <position position="215"/>
    </location>
    <ligand>
        <name>FMN</name>
        <dbReference type="ChEBI" id="CHEBI:58210"/>
    </ligand>
</feature>
<feature type="binding site" evidence="1">
    <location>
        <begin position="307"/>
        <end position="308"/>
    </location>
    <ligand>
        <name>FMN</name>
        <dbReference type="ChEBI" id="CHEBI:58210"/>
    </ligand>
</feature>
<comment type="function">
    <text evidence="1">Catalyzes the reduction of the double bond of an array of alpha,beta-unsaturated aldehydes and ketones. It also reduces the nitro group of nitroester and nitroaromatic compounds. It could have a role in detoxification processes.</text>
</comment>
<comment type="catalytic activity">
    <reaction evidence="1">
        <text>A + NADPH + H(+) = AH2 + NADP(+)</text>
        <dbReference type="Rhea" id="RHEA:13149"/>
        <dbReference type="ChEBI" id="CHEBI:13193"/>
        <dbReference type="ChEBI" id="CHEBI:15378"/>
        <dbReference type="ChEBI" id="CHEBI:17499"/>
        <dbReference type="ChEBI" id="CHEBI:57783"/>
        <dbReference type="ChEBI" id="CHEBI:58349"/>
        <dbReference type="EC" id="1.6.99.1"/>
    </reaction>
</comment>
<comment type="cofactor">
    <cofactor evidence="1">
        <name>FMN</name>
        <dbReference type="ChEBI" id="CHEBI:58210"/>
    </cofactor>
</comment>
<comment type="subunit">
    <text evidence="1">Homotetramer.</text>
</comment>
<comment type="similarity">
    <text evidence="1">Belongs to the NADH:flavin oxidoreductase/NADH oxidase family. NamA subfamily.</text>
</comment>
<protein>
    <recommendedName>
        <fullName evidence="1">NADPH dehydrogenase</fullName>
        <ecNumber evidence="1">1.6.99.1</ecNumber>
    </recommendedName>
</protein>
<proteinExistence type="inferred from homology"/>
<name>NAMA_BACAH</name>